<comment type="function">
    <text evidence="1">Catalyzes the synthesis of the hydroxymethylpyrimidine phosphate (HMP-P) moiety of thiamine from aminoimidazole ribotide (AIR) in a radical S-adenosyl-L-methionine (SAM)-dependent reaction.</text>
</comment>
<comment type="catalytic activity">
    <reaction evidence="1">
        <text>5-amino-1-(5-phospho-beta-D-ribosyl)imidazole + S-adenosyl-L-methionine = 4-amino-2-methyl-5-(phosphooxymethyl)pyrimidine + CO + 5'-deoxyadenosine + formate + L-methionine + 3 H(+)</text>
        <dbReference type="Rhea" id="RHEA:24840"/>
        <dbReference type="ChEBI" id="CHEBI:15378"/>
        <dbReference type="ChEBI" id="CHEBI:15740"/>
        <dbReference type="ChEBI" id="CHEBI:17245"/>
        <dbReference type="ChEBI" id="CHEBI:17319"/>
        <dbReference type="ChEBI" id="CHEBI:57844"/>
        <dbReference type="ChEBI" id="CHEBI:58354"/>
        <dbReference type="ChEBI" id="CHEBI:59789"/>
        <dbReference type="ChEBI" id="CHEBI:137981"/>
        <dbReference type="EC" id="4.1.99.17"/>
    </reaction>
</comment>
<comment type="cofactor">
    <cofactor evidence="1">
        <name>[4Fe-4S] cluster</name>
        <dbReference type="ChEBI" id="CHEBI:49883"/>
    </cofactor>
    <text evidence="1">Binds 1 [4Fe-4S] cluster per subunit. The cluster is coordinated with 3 cysteines and an exchangeable S-adenosyl-L-methionine.</text>
</comment>
<comment type="pathway">
    <text evidence="1">Cofactor biosynthesis; thiamine diphosphate biosynthesis.</text>
</comment>
<comment type="subunit">
    <text evidence="1">Homodimer.</text>
</comment>
<comment type="similarity">
    <text evidence="1">Belongs to the ThiC family.</text>
</comment>
<feature type="chain" id="PRO_0000242249" description="Phosphomethylpyrimidine synthase">
    <location>
        <begin position="1"/>
        <end position="648"/>
    </location>
</feature>
<feature type="binding site" evidence="1">
    <location>
        <position position="253"/>
    </location>
    <ligand>
        <name>substrate</name>
    </ligand>
</feature>
<feature type="binding site" evidence="1">
    <location>
        <position position="282"/>
    </location>
    <ligand>
        <name>substrate</name>
    </ligand>
</feature>
<feature type="binding site" evidence="1">
    <location>
        <position position="311"/>
    </location>
    <ligand>
        <name>substrate</name>
    </ligand>
</feature>
<feature type="binding site" evidence="1">
    <location>
        <position position="347"/>
    </location>
    <ligand>
        <name>substrate</name>
    </ligand>
</feature>
<feature type="binding site" evidence="1">
    <location>
        <begin position="367"/>
        <end position="369"/>
    </location>
    <ligand>
        <name>substrate</name>
    </ligand>
</feature>
<feature type="binding site" evidence="1">
    <location>
        <begin position="408"/>
        <end position="411"/>
    </location>
    <ligand>
        <name>substrate</name>
    </ligand>
</feature>
<feature type="binding site" evidence="1">
    <location>
        <position position="447"/>
    </location>
    <ligand>
        <name>substrate</name>
    </ligand>
</feature>
<feature type="binding site" evidence="1">
    <location>
        <position position="451"/>
    </location>
    <ligand>
        <name>Zn(2+)</name>
        <dbReference type="ChEBI" id="CHEBI:29105"/>
    </ligand>
</feature>
<feature type="binding site" evidence="1">
    <location>
        <position position="474"/>
    </location>
    <ligand>
        <name>substrate</name>
    </ligand>
</feature>
<feature type="binding site" evidence="1">
    <location>
        <position position="515"/>
    </location>
    <ligand>
        <name>Zn(2+)</name>
        <dbReference type="ChEBI" id="CHEBI:29105"/>
    </ligand>
</feature>
<feature type="binding site" evidence="1">
    <location>
        <position position="595"/>
    </location>
    <ligand>
        <name>[4Fe-4S] cluster</name>
        <dbReference type="ChEBI" id="CHEBI:49883"/>
        <note>4Fe-4S-S-AdoMet</note>
    </ligand>
</feature>
<feature type="binding site" evidence="1">
    <location>
        <position position="598"/>
    </location>
    <ligand>
        <name>[4Fe-4S] cluster</name>
        <dbReference type="ChEBI" id="CHEBI:49883"/>
        <note>4Fe-4S-S-AdoMet</note>
    </ligand>
</feature>
<feature type="binding site" evidence="1">
    <location>
        <position position="603"/>
    </location>
    <ligand>
        <name>[4Fe-4S] cluster</name>
        <dbReference type="ChEBI" id="CHEBI:49883"/>
        <note>4Fe-4S-S-AdoMet</note>
    </ligand>
</feature>
<sequence>MNANPKFLSADARVDAAAVAPLPNSRKVYVTGSQPDIRVPMREITQADTPTSFGGEKNPPIYVYDTSGPYTDPDAKIDIRAGLPALRQRWIDARGDTETLAGLTSEYGRERAADPATAELRFPDLHRHPRRAKAGRNVTQMHYARQGIITPEMEFIAIRENQRRAEYLESLKASGPNGAKLAAMMGRQHAGQAFGAAAFGANEAGTNMLTEITPEFVRSEVACGRAIIPANINHPETEPMIIGRNFLVKINANIGNSAVTSSIGEEVDKMTWAIRWGGDTVMDLSTGKHIHETREWIIRNSPVPIGTVPIYQALEKVNGKAEDLTWEIFRDTLIEQAEQGVDYFTIHAGVRLQYVPLTANRMTGIVSRGGSIMAKWCLAHHKESFLYEHFEEICEIMKAYDVSFSLGDGLRPGSIYDANDEAQLGELKTLGELTQIAWKHDVQVMIEGPGHVPMQLIKENMDLQLDWCKEAPFYTLGPLTTDIAPGYDHITSGIGAAMIGWFGTAMLCYVTPKEHLGLPNKDDVKEGIITYKLAAHAADLAKGHPGAQVRDNALSKARFEFRWEDQFNLGLDPDKAREFHDETLPKDSAKVAHFCSMCGPHFCSMKITQDVREFAAQQGMSEDDALKKGMEVKAVEFVKTGSEIYHRQ</sequence>
<organism>
    <name type="scientific">Burkholderia thailandensis (strain ATCC 700388 / DSM 13276 / CCUG 48851 / CIP 106301 / E264)</name>
    <dbReference type="NCBI Taxonomy" id="271848"/>
    <lineage>
        <taxon>Bacteria</taxon>
        <taxon>Pseudomonadati</taxon>
        <taxon>Pseudomonadota</taxon>
        <taxon>Betaproteobacteria</taxon>
        <taxon>Burkholderiales</taxon>
        <taxon>Burkholderiaceae</taxon>
        <taxon>Burkholderia</taxon>
        <taxon>pseudomallei group</taxon>
    </lineage>
</organism>
<evidence type="ECO:0000255" key="1">
    <source>
        <dbReference type="HAMAP-Rule" id="MF_00089"/>
    </source>
</evidence>
<protein>
    <recommendedName>
        <fullName evidence="1">Phosphomethylpyrimidine synthase</fullName>
        <ecNumber evidence="1">4.1.99.17</ecNumber>
    </recommendedName>
    <alternativeName>
        <fullName evidence="1">Hydroxymethylpyrimidine phosphate synthase</fullName>
        <shortName evidence="1">HMP-P synthase</shortName>
        <shortName evidence="1">HMP-phosphate synthase</shortName>
        <shortName evidence="1">HMPP synthase</shortName>
    </alternativeName>
    <alternativeName>
        <fullName evidence="1">Thiamine biosynthesis protein ThiC</fullName>
    </alternativeName>
</protein>
<keyword id="KW-0004">4Fe-4S</keyword>
<keyword id="KW-0408">Iron</keyword>
<keyword id="KW-0411">Iron-sulfur</keyword>
<keyword id="KW-0456">Lyase</keyword>
<keyword id="KW-0479">Metal-binding</keyword>
<keyword id="KW-0949">S-adenosyl-L-methionine</keyword>
<keyword id="KW-0784">Thiamine biosynthesis</keyword>
<keyword id="KW-0862">Zinc</keyword>
<accession>Q2SUP3</accession>
<reference key="1">
    <citation type="journal article" date="2005" name="BMC Genomics">
        <title>Bacterial genome adaptation to niches: divergence of the potential virulence genes in three Burkholderia species of different survival strategies.</title>
        <authorList>
            <person name="Kim H.S."/>
            <person name="Schell M.A."/>
            <person name="Yu Y."/>
            <person name="Ulrich R.L."/>
            <person name="Sarria S.H."/>
            <person name="Nierman W.C."/>
            <person name="DeShazer D."/>
        </authorList>
    </citation>
    <scope>NUCLEOTIDE SEQUENCE [LARGE SCALE GENOMIC DNA]</scope>
    <source>
        <strain>ATCC 700388 / DSM 13276 / CCUG 48851 / CIP 106301 / E264</strain>
    </source>
</reference>
<dbReference type="EC" id="4.1.99.17" evidence="1"/>
<dbReference type="EMBL" id="CP000086">
    <property type="protein sequence ID" value="ABC37421.1"/>
    <property type="molecule type" value="Genomic_DNA"/>
</dbReference>
<dbReference type="RefSeq" id="WP_009906169.1">
    <property type="nucleotide sequence ID" value="NZ_CP008785.1"/>
</dbReference>
<dbReference type="SMR" id="Q2SUP3"/>
<dbReference type="GeneID" id="45122537"/>
<dbReference type="KEGG" id="bte:BTH_I2844"/>
<dbReference type="HOGENOM" id="CLU_013181_2_1_4"/>
<dbReference type="UniPathway" id="UPA00060"/>
<dbReference type="Proteomes" id="UP000001930">
    <property type="component" value="Chromosome I"/>
</dbReference>
<dbReference type="GO" id="GO:0005829">
    <property type="term" value="C:cytosol"/>
    <property type="evidence" value="ECO:0007669"/>
    <property type="project" value="TreeGrafter"/>
</dbReference>
<dbReference type="GO" id="GO:0051539">
    <property type="term" value="F:4 iron, 4 sulfur cluster binding"/>
    <property type="evidence" value="ECO:0007669"/>
    <property type="project" value="UniProtKB-KW"/>
</dbReference>
<dbReference type="GO" id="GO:0016830">
    <property type="term" value="F:carbon-carbon lyase activity"/>
    <property type="evidence" value="ECO:0007669"/>
    <property type="project" value="InterPro"/>
</dbReference>
<dbReference type="GO" id="GO:0008270">
    <property type="term" value="F:zinc ion binding"/>
    <property type="evidence" value="ECO:0007669"/>
    <property type="project" value="UniProtKB-UniRule"/>
</dbReference>
<dbReference type="GO" id="GO:0009228">
    <property type="term" value="P:thiamine biosynthetic process"/>
    <property type="evidence" value="ECO:0007669"/>
    <property type="project" value="UniProtKB-KW"/>
</dbReference>
<dbReference type="GO" id="GO:0009229">
    <property type="term" value="P:thiamine diphosphate biosynthetic process"/>
    <property type="evidence" value="ECO:0007669"/>
    <property type="project" value="UniProtKB-UniRule"/>
</dbReference>
<dbReference type="FunFam" id="3.20.20.540:FF:000001">
    <property type="entry name" value="Phosphomethylpyrimidine synthase"/>
    <property type="match status" value="1"/>
</dbReference>
<dbReference type="Gene3D" id="6.10.250.620">
    <property type="match status" value="1"/>
</dbReference>
<dbReference type="Gene3D" id="3.20.20.540">
    <property type="entry name" value="Radical SAM ThiC family, central domain"/>
    <property type="match status" value="1"/>
</dbReference>
<dbReference type="HAMAP" id="MF_00089">
    <property type="entry name" value="ThiC"/>
    <property type="match status" value="1"/>
</dbReference>
<dbReference type="InterPro" id="IPR037509">
    <property type="entry name" value="ThiC"/>
</dbReference>
<dbReference type="InterPro" id="IPR025747">
    <property type="entry name" value="ThiC-associated_dom"/>
</dbReference>
<dbReference type="InterPro" id="IPR038521">
    <property type="entry name" value="ThiC/Bza_core_dom"/>
</dbReference>
<dbReference type="InterPro" id="IPR002817">
    <property type="entry name" value="ThiC/BzaA/B"/>
</dbReference>
<dbReference type="NCBIfam" id="NF006763">
    <property type="entry name" value="PRK09284.1"/>
    <property type="match status" value="1"/>
</dbReference>
<dbReference type="NCBIfam" id="NF009895">
    <property type="entry name" value="PRK13352.1"/>
    <property type="match status" value="1"/>
</dbReference>
<dbReference type="NCBIfam" id="TIGR00190">
    <property type="entry name" value="thiC"/>
    <property type="match status" value="1"/>
</dbReference>
<dbReference type="PANTHER" id="PTHR30557:SF1">
    <property type="entry name" value="PHOSPHOMETHYLPYRIMIDINE SYNTHASE, CHLOROPLASTIC"/>
    <property type="match status" value="1"/>
</dbReference>
<dbReference type="PANTHER" id="PTHR30557">
    <property type="entry name" value="THIAMINE BIOSYNTHESIS PROTEIN THIC"/>
    <property type="match status" value="1"/>
</dbReference>
<dbReference type="Pfam" id="PF13667">
    <property type="entry name" value="ThiC-associated"/>
    <property type="match status" value="1"/>
</dbReference>
<dbReference type="Pfam" id="PF01964">
    <property type="entry name" value="ThiC_Rad_SAM"/>
    <property type="match status" value="1"/>
</dbReference>
<dbReference type="SFLD" id="SFLDF00407">
    <property type="entry name" value="phosphomethylpyrimidine_syntha"/>
    <property type="match status" value="1"/>
</dbReference>
<dbReference type="SFLD" id="SFLDG01114">
    <property type="entry name" value="phosphomethylpyrimidine_syntha"/>
    <property type="match status" value="1"/>
</dbReference>
<dbReference type="SFLD" id="SFLDS00113">
    <property type="entry name" value="Radical_SAM_Phosphomethylpyrim"/>
    <property type="match status" value="1"/>
</dbReference>
<gene>
    <name evidence="1" type="primary">thiC</name>
    <name type="ordered locus">BTH_I2844</name>
</gene>
<proteinExistence type="inferred from homology"/>
<name>THIC_BURTA</name>